<protein>
    <recommendedName>
        <fullName evidence="1">Uroporphyrinogen decarboxylase</fullName>
        <shortName evidence="1">UPD</shortName>
        <shortName evidence="1">URO-D</shortName>
        <ecNumber evidence="1">4.1.1.37</ecNumber>
    </recommendedName>
</protein>
<keyword id="KW-0963">Cytoplasm</keyword>
<keyword id="KW-0210">Decarboxylase</keyword>
<keyword id="KW-0456">Lyase</keyword>
<keyword id="KW-0627">Porphyrin biosynthesis</keyword>
<keyword id="KW-1185">Reference proteome</keyword>
<dbReference type="EC" id="4.1.1.37" evidence="1"/>
<dbReference type="EMBL" id="CP000806">
    <property type="protein sequence ID" value="ACB52314.1"/>
    <property type="molecule type" value="Genomic_DNA"/>
</dbReference>
<dbReference type="RefSeq" id="WP_009547422.1">
    <property type="nucleotide sequence ID" value="NC_010546.1"/>
</dbReference>
<dbReference type="SMR" id="B1WVY1"/>
<dbReference type="STRING" id="43989.cce_2966"/>
<dbReference type="KEGG" id="cyt:cce_2966"/>
<dbReference type="eggNOG" id="COG0407">
    <property type="taxonomic scope" value="Bacteria"/>
</dbReference>
<dbReference type="HOGENOM" id="CLU_040933_0_2_3"/>
<dbReference type="OrthoDB" id="9806656at2"/>
<dbReference type="UniPathway" id="UPA00251">
    <property type="reaction ID" value="UER00321"/>
</dbReference>
<dbReference type="Proteomes" id="UP000001203">
    <property type="component" value="Chromosome circular"/>
</dbReference>
<dbReference type="GO" id="GO:0005737">
    <property type="term" value="C:cytoplasm"/>
    <property type="evidence" value="ECO:0007669"/>
    <property type="project" value="UniProtKB-SubCell"/>
</dbReference>
<dbReference type="GO" id="GO:0004853">
    <property type="term" value="F:uroporphyrinogen decarboxylase activity"/>
    <property type="evidence" value="ECO:0007669"/>
    <property type="project" value="UniProtKB-UniRule"/>
</dbReference>
<dbReference type="GO" id="GO:0006782">
    <property type="term" value="P:protoporphyrinogen IX biosynthetic process"/>
    <property type="evidence" value="ECO:0007669"/>
    <property type="project" value="UniProtKB-UniRule"/>
</dbReference>
<dbReference type="CDD" id="cd00717">
    <property type="entry name" value="URO-D"/>
    <property type="match status" value="1"/>
</dbReference>
<dbReference type="FunFam" id="3.20.20.210:FF:000006">
    <property type="entry name" value="Uroporphyrinogen decarboxylase"/>
    <property type="match status" value="1"/>
</dbReference>
<dbReference type="Gene3D" id="3.20.20.210">
    <property type="match status" value="1"/>
</dbReference>
<dbReference type="HAMAP" id="MF_00218">
    <property type="entry name" value="URO_D"/>
    <property type="match status" value="1"/>
</dbReference>
<dbReference type="InterPro" id="IPR038071">
    <property type="entry name" value="UROD/MetE-like_sf"/>
</dbReference>
<dbReference type="InterPro" id="IPR006361">
    <property type="entry name" value="Uroporphyrinogen_deCO2ase_HemE"/>
</dbReference>
<dbReference type="InterPro" id="IPR000257">
    <property type="entry name" value="Uroporphyrinogen_deCOase"/>
</dbReference>
<dbReference type="NCBIfam" id="TIGR01464">
    <property type="entry name" value="hemE"/>
    <property type="match status" value="1"/>
</dbReference>
<dbReference type="PANTHER" id="PTHR21091">
    <property type="entry name" value="METHYLTETRAHYDROFOLATE:HOMOCYSTEINE METHYLTRANSFERASE RELATED"/>
    <property type="match status" value="1"/>
</dbReference>
<dbReference type="PANTHER" id="PTHR21091:SF169">
    <property type="entry name" value="UROPORPHYRINOGEN DECARBOXYLASE"/>
    <property type="match status" value="1"/>
</dbReference>
<dbReference type="Pfam" id="PF01208">
    <property type="entry name" value="URO-D"/>
    <property type="match status" value="1"/>
</dbReference>
<dbReference type="SUPFAM" id="SSF51726">
    <property type="entry name" value="UROD/MetE-like"/>
    <property type="match status" value="1"/>
</dbReference>
<dbReference type="PROSITE" id="PS00906">
    <property type="entry name" value="UROD_1"/>
    <property type="match status" value="1"/>
</dbReference>
<dbReference type="PROSITE" id="PS00907">
    <property type="entry name" value="UROD_2"/>
    <property type="match status" value="1"/>
</dbReference>
<reference key="1">
    <citation type="journal article" date="2008" name="Proc. Natl. Acad. Sci. U.S.A.">
        <title>The genome of Cyanothece 51142, a unicellular diazotrophic cyanobacterium important in the marine nitrogen cycle.</title>
        <authorList>
            <person name="Welsh E.A."/>
            <person name="Liberton M."/>
            <person name="Stoeckel J."/>
            <person name="Loh T."/>
            <person name="Elvitigala T."/>
            <person name="Wang C."/>
            <person name="Wollam A."/>
            <person name="Fulton R.S."/>
            <person name="Clifton S.W."/>
            <person name="Jacobs J.M."/>
            <person name="Aurora R."/>
            <person name="Ghosh B.K."/>
            <person name="Sherman L.A."/>
            <person name="Smith R.D."/>
            <person name="Wilson R.K."/>
            <person name="Pakrasi H.B."/>
        </authorList>
    </citation>
    <scope>NUCLEOTIDE SEQUENCE [LARGE SCALE GENOMIC DNA]</scope>
    <source>
        <strain>ATCC 51142 / BH68</strain>
    </source>
</reference>
<evidence type="ECO:0000255" key="1">
    <source>
        <dbReference type="HAMAP-Rule" id="MF_00218"/>
    </source>
</evidence>
<organism>
    <name type="scientific">Crocosphaera subtropica (strain ATCC 51142 / BH68)</name>
    <name type="common">Cyanothece sp. (strain ATCC 51142)</name>
    <dbReference type="NCBI Taxonomy" id="43989"/>
    <lineage>
        <taxon>Bacteria</taxon>
        <taxon>Bacillati</taxon>
        <taxon>Cyanobacteriota</taxon>
        <taxon>Cyanophyceae</taxon>
        <taxon>Oscillatoriophycideae</taxon>
        <taxon>Chroococcales</taxon>
        <taxon>Aphanothecaceae</taxon>
        <taxon>Crocosphaera</taxon>
        <taxon>Crocosphaera subtropica</taxon>
    </lineage>
</organism>
<proteinExistence type="inferred from homology"/>
<comment type="function">
    <text evidence="1">Catalyzes the decarboxylation of four acetate groups of uroporphyrinogen-III to yield coproporphyrinogen-III.</text>
</comment>
<comment type="catalytic activity">
    <reaction evidence="1">
        <text>uroporphyrinogen III + 4 H(+) = coproporphyrinogen III + 4 CO2</text>
        <dbReference type="Rhea" id="RHEA:19865"/>
        <dbReference type="ChEBI" id="CHEBI:15378"/>
        <dbReference type="ChEBI" id="CHEBI:16526"/>
        <dbReference type="ChEBI" id="CHEBI:57308"/>
        <dbReference type="ChEBI" id="CHEBI:57309"/>
        <dbReference type="EC" id="4.1.1.37"/>
    </reaction>
</comment>
<comment type="pathway">
    <text evidence="1">Porphyrin-containing compound metabolism; protoporphyrin-IX biosynthesis; coproporphyrinogen-III from 5-aminolevulinate: step 4/4.</text>
</comment>
<comment type="subunit">
    <text evidence="1">Homodimer.</text>
</comment>
<comment type="subcellular location">
    <subcellularLocation>
        <location evidence="1">Cytoplasm</location>
    </subcellularLocation>
</comment>
<comment type="similarity">
    <text evidence="1">Belongs to the uroporphyrinogen decarboxylase family.</text>
</comment>
<feature type="chain" id="PRO_1000099987" description="Uroporphyrinogen decarboxylase">
    <location>
        <begin position="1"/>
        <end position="354"/>
    </location>
</feature>
<feature type="binding site" evidence="1">
    <location>
        <begin position="28"/>
        <end position="32"/>
    </location>
    <ligand>
        <name>substrate</name>
    </ligand>
</feature>
<feature type="binding site" evidence="1">
    <location>
        <position position="78"/>
    </location>
    <ligand>
        <name>substrate</name>
    </ligand>
</feature>
<feature type="binding site" evidence="1">
    <location>
        <position position="155"/>
    </location>
    <ligand>
        <name>substrate</name>
    </ligand>
</feature>
<feature type="binding site" evidence="1">
    <location>
        <position position="210"/>
    </location>
    <ligand>
        <name>substrate</name>
    </ligand>
</feature>
<feature type="binding site" evidence="1">
    <location>
        <position position="325"/>
    </location>
    <ligand>
        <name>substrate</name>
    </ligand>
</feature>
<feature type="site" description="Transition state stabilizer" evidence="1">
    <location>
        <position position="78"/>
    </location>
</feature>
<name>DCUP_CROS5</name>
<accession>B1WVY1</accession>
<gene>
    <name evidence="1" type="primary">hemE</name>
    <name type="ordered locus">cce_2966</name>
</gene>
<sequence length="354" mass="39520">MTGANDTPYLLRAARGEILDRPPVWMMRQAGRYMKVYRDLRDKYPSFRERSENPDLAIEISLQPWRAFQPDGVIMFSDILTPLPGMGIPFDIVESKGPVIDPPIRTKEQVDNLRPLDPEESLPFIKTILQSLRQEVGNQSTVLGFVGSPWTLAAYAIEGKSSKNYAIIKSMAFSQPEILHSFLSKIADAIAIYVRYQIDCGAQVVQLFDSWAGQLSPQDYETFALPYQQQVVRQVKETHPDTPLILYISGSAGVLERMGQSGVDIVSVDWTVDMAEARQRLGRDMKVQGNIDPGVLFGSQDFIKARILDTVRKAGRGGHILNLGHGVLVGTPEDNVRCFFETAKQVDQLLAVPV</sequence>